<proteinExistence type="inferred from homology"/>
<accession>Q5FTN3</accession>
<organism>
    <name type="scientific">Gluconobacter oxydans (strain 621H)</name>
    <name type="common">Gluconobacter suboxydans</name>
    <dbReference type="NCBI Taxonomy" id="290633"/>
    <lineage>
        <taxon>Bacteria</taxon>
        <taxon>Pseudomonadati</taxon>
        <taxon>Pseudomonadota</taxon>
        <taxon>Alphaproteobacteria</taxon>
        <taxon>Acetobacterales</taxon>
        <taxon>Acetobacteraceae</taxon>
        <taxon>Gluconobacter</taxon>
    </lineage>
</organism>
<evidence type="ECO:0000255" key="1">
    <source>
        <dbReference type="HAMAP-Rule" id="MF_01013"/>
    </source>
</evidence>
<dbReference type="EC" id="4.3.2.10" evidence="1"/>
<dbReference type="EMBL" id="CP000009">
    <property type="protein sequence ID" value="AAW60263.1"/>
    <property type="molecule type" value="Genomic_DNA"/>
</dbReference>
<dbReference type="RefSeq" id="WP_011252064.1">
    <property type="nucleotide sequence ID" value="NC_006677.1"/>
</dbReference>
<dbReference type="SMR" id="Q5FTN3"/>
<dbReference type="STRING" id="290633.GOX0483"/>
<dbReference type="KEGG" id="gox:GOX0483"/>
<dbReference type="eggNOG" id="COG0107">
    <property type="taxonomic scope" value="Bacteria"/>
</dbReference>
<dbReference type="HOGENOM" id="CLU_048577_4_0_5"/>
<dbReference type="UniPathway" id="UPA00031">
    <property type="reaction ID" value="UER00010"/>
</dbReference>
<dbReference type="Proteomes" id="UP000006375">
    <property type="component" value="Chromosome"/>
</dbReference>
<dbReference type="GO" id="GO:0005737">
    <property type="term" value="C:cytoplasm"/>
    <property type="evidence" value="ECO:0007669"/>
    <property type="project" value="UniProtKB-SubCell"/>
</dbReference>
<dbReference type="GO" id="GO:0000107">
    <property type="term" value="F:imidazoleglycerol-phosphate synthase activity"/>
    <property type="evidence" value="ECO:0007669"/>
    <property type="project" value="UniProtKB-UniRule"/>
</dbReference>
<dbReference type="GO" id="GO:0016829">
    <property type="term" value="F:lyase activity"/>
    <property type="evidence" value="ECO:0007669"/>
    <property type="project" value="UniProtKB-KW"/>
</dbReference>
<dbReference type="GO" id="GO:0000105">
    <property type="term" value="P:L-histidine biosynthetic process"/>
    <property type="evidence" value="ECO:0007669"/>
    <property type="project" value="UniProtKB-UniRule"/>
</dbReference>
<dbReference type="CDD" id="cd04731">
    <property type="entry name" value="HisF"/>
    <property type="match status" value="1"/>
</dbReference>
<dbReference type="FunFam" id="3.20.20.70:FF:000006">
    <property type="entry name" value="Imidazole glycerol phosphate synthase subunit HisF"/>
    <property type="match status" value="1"/>
</dbReference>
<dbReference type="Gene3D" id="3.20.20.70">
    <property type="entry name" value="Aldolase class I"/>
    <property type="match status" value="1"/>
</dbReference>
<dbReference type="HAMAP" id="MF_01013">
    <property type="entry name" value="HisF"/>
    <property type="match status" value="1"/>
</dbReference>
<dbReference type="InterPro" id="IPR013785">
    <property type="entry name" value="Aldolase_TIM"/>
</dbReference>
<dbReference type="InterPro" id="IPR006062">
    <property type="entry name" value="His_biosynth"/>
</dbReference>
<dbReference type="InterPro" id="IPR004651">
    <property type="entry name" value="HisF"/>
</dbReference>
<dbReference type="InterPro" id="IPR050064">
    <property type="entry name" value="IGPS_HisA/HisF"/>
</dbReference>
<dbReference type="InterPro" id="IPR011060">
    <property type="entry name" value="RibuloseP-bd_barrel"/>
</dbReference>
<dbReference type="NCBIfam" id="TIGR00735">
    <property type="entry name" value="hisF"/>
    <property type="match status" value="1"/>
</dbReference>
<dbReference type="PANTHER" id="PTHR21235:SF2">
    <property type="entry name" value="IMIDAZOLE GLYCEROL PHOSPHATE SYNTHASE HISHF"/>
    <property type="match status" value="1"/>
</dbReference>
<dbReference type="PANTHER" id="PTHR21235">
    <property type="entry name" value="IMIDAZOLE GLYCEROL PHOSPHATE SYNTHASE SUBUNIT HISF/H IGP SYNTHASE SUBUNIT HISF/H"/>
    <property type="match status" value="1"/>
</dbReference>
<dbReference type="Pfam" id="PF00977">
    <property type="entry name" value="His_biosynth"/>
    <property type="match status" value="1"/>
</dbReference>
<dbReference type="SUPFAM" id="SSF51366">
    <property type="entry name" value="Ribulose-phoshate binding barrel"/>
    <property type="match status" value="1"/>
</dbReference>
<feature type="chain" id="PRO_0000142162" description="Imidazole glycerol phosphate synthase subunit HisF">
    <location>
        <begin position="1"/>
        <end position="253"/>
    </location>
</feature>
<feature type="active site" evidence="1">
    <location>
        <position position="11"/>
    </location>
</feature>
<feature type="active site" evidence="1">
    <location>
        <position position="130"/>
    </location>
</feature>
<reference key="1">
    <citation type="journal article" date="2005" name="Nat. Biotechnol.">
        <title>Complete genome sequence of the acetic acid bacterium Gluconobacter oxydans.</title>
        <authorList>
            <person name="Prust C."/>
            <person name="Hoffmeister M."/>
            <person name="Liesegang H."/>
            <person name="Wiezer A."/>
            <person name="Fricke W.F."/>
            <person name="Ehrenreich A."/>
            <person name="Gottschalk G."/>
            <person name="Deppenmeier U."/>
        </authorList>
    </citation>
    <scope>NUCLEOTIDE SEQUENCE [LARGE SCALE GENOMIC DNA]</scope>
    <source>
        <strain>621H</strain>
    </source>
</reference>
<protein>
    <recommendedName>
        <fullName evidence="1">Imidazole glycerol phosphate synthase subunit HisF</fullName>
        <ecNumber evidence="1">4.3.2.10</ecNumber>
    </recommendedName>
    <alternativeName>
        <fullName evidence="1">IGP synthase cyclase subunit</fullName>
    </alternativeName>
    <alternativeName>
        <fullName evidence="1">IGP synthase subunit HisF</fullName>
    </alternativeName>
    <alternativeName>
        <fullName evidence="1">ImGP synthase subunit HisF</fullName>
        <shortName evidence="1">IGPS subunit HisF</shortName>
    </alternativeName>
</protein>
<comment type="function">
    <text evidence="1">IGPS catalyzes the conversion of PRFAR and glutamine to IGP, AICAR and glutamate. The HisF subunit catalyzes the cyclization activity that produces IGP and AICAR from PRFAR using the ammonia provided by the HisH subunit.</text>
</comment>
<comment type="catalytic activity">
    <reaction evidence="1">
        <text>5-[(5-phospho-1-deoxy-D-ribulos-1-ylimino)methylamino]-1-(5-phospho-beta-D-ribosyl)imidazole-4-carboxamide + L-glutamine = D-erythro-1-(imidazol-4-yl)glycerol 3-phosphate + 5-amino-1-(5-phospho-beta-D-ribosyl)imidazole-4-carboxamide + L-glutamate + H(+)</text>
        <dbReference type="Rhea" id="RHEA:24793"/>
        <dbReference type="ChEBI" id="CHEBI:15378"/>
        <dbReference type="ChEBI" id="CHEBI:29985"/>
        <dbReference type="ChEBI" id="CHEBI:58278"/>
        <dbReference type="ChEBI" id="CHEBI:58359"/>
        <dbReference type="ChEBI" id="CHEBI:58475"/>
        <dbReference type="ChEBI" id="CHEBI:58525"/>
        <dbReference type="EC" id="4.3.2.10"/>
    </reaction>
</comment>
<comment type="pathway">
    <text evidence="1">Amino-acid biosynthesis; L-histidine biosynthesis; L-histidine from 5-phospho-alpha-D-ribose 1-diphosphate: step 5/9.</text>
</comment>
<comment type="subunit">
    <text evidence="1">Heterodimer of HisH and HisF.</text>
</comment>
<comment type="subcellular location">
    <subcellularLocation>
        <location evidence="1">Cytoplasm</location>
    </subcellularLocation>
</comment>
<comment type="similarity">
    <text evidence="1">Belongs to the HisA/HisF family.</text>
</comment>
<gene>
    <name evidence="1" type="primary">hisF</name>
    <name type="ordered locus">GOX0483</name>
</gene>
<keyword id="KW-0028">Amino-acid biosynthesis</keyword>
<keyword id="KW-0963">Cytoplasm</keyword>
<keyword id="KW-0368">Histidine biosynthesis</keyword>
<keyword id="KW-0456">Lyase</keyword>
<keyword id="KW-1185">Reference proteome</keyword>
<sequence>MLKLRVIPCLDVKDGRVVKGVNFVSLRDAGDPVEQAKLYDAAGADELTFLDITASVENRDTILDVVRRTAEAICLPLTVGGGVRTCEDMRRLLLAGADKCAVNSAAIKNPDLIREASERFGSQCIVVAIDARSNGKGGWEVYAKGGREPTGLDVVEWARKMQDLGAGEILLTSMDRDGTRAGFDLDLLRAVCGAVTVPIVASGGVGELQHFVEGAEVGASGLLAASVFHFGQFRIDEVKNALNKAGLPVRLGE</sequence>
<name>HIS6_GLUOX</name>